<sequence>MISFHVIFLSLGRGKLFLPVNFCFLKLKNSQVRIPKDFTCNLHVLFRTVQGEDRNTMFRGHWSIYSRNFPLAVVPAYVTEDGKNTSHRASGQFCNALSQGEIPSSLQLVNSYALEPRTDMPCNFLT</sequence>
<feature type="chain" id="PRO_0000343227" description="Putative uncharacterized protein FLJ46792">
    <location>
        <begin position="1"/>
        <end position="126"/>
    </location>
</feature>
<keyword id="KW-1185">Reference proteome</keyword>
<name>YO026_HUMAN</name>
<dbReference type="EMBL" id="AK128633">
    <property type="status" value="NOT_ANNOTATED_CDS"/>
    <property type="molecule type" value="mRNA"/>
</dbReference>
<dbReference type="BioMuta" id="-"/>
<dbReference type="DMDM" id="74711011"/>
<dbReference type="neXtProt" id="NX_Q6ZQY7"/>
<dbReference type="InParanoid" id="Q6ZQY7"/>
<dbReference type="PAN-GO" id="Q6ZQY7">
    <property type="GO annotations" value="0 GO annotations based on evolutionary models"/>
</dbReference>
<dbReference type="Pharos" id="Q6ZQY7">
    <property type="development level" value="Tdark"/>
</dbReference>
<dbReference type="Proteomes" id="UP000005640">
    <property type="component" value="Unplaced"/>
</dbReference>
<dbReference type="RNAct" id="Q6ZQY7">
    <property type="molecule type" value="protein"/>
</dbReference>
<protein>
    <recommendedName>
        <fullName>Putative uncharacterized protein FLJ46792</fullName>
    </recommendedName>
</protein>
<proteinExistence type="evidence at transcript level"/>
<accession>Q6ZQY7</accession>
<organism>
    <name type="scientific">Homo sapiens</name>
    <name type="common">Human</name>
    <dbReference type="NCBI Taxonomy" id="9606"/>
    <lineage>
        <taxon>Eukaryota</taxon>
        <taxon>Metazoa</taxon>
        <taxon>Chordata</taxon>
        <taxon>Craniata</taxon>
        <taxon>Vertebrata</taxon>
        <taxon>Euteleostomi</taxon>
        <taxon>Mammalia</taxon>
        <taxon>Eutheria</taxon>
        <taxon>Euarchontoglires</taxon>
        <taxon>Primates</taxon>
        <taxon>Haplorrhini</taxon>
        <taxon>Catarrhini</taxon>
        <taxon>Hominidae</taxon>
        <taxon>Homo</taxon>
    </lineage>
</organism>
<reference key="1">
    <citation type="journal article" date="2004" name="Nat. Genet.">
        <title>Complete sequencing and characterization of 21,243 full-length human cDNAs.</title>
        <authorList>
            <person name="Ota T."/>
            <person name="Suzuki Y."/>
            <person name="Nishikawa T."/>
            <person name="Otsuki T."/>
            <person name="Sugiyama T."/>
            <person name="Irie R."/>
            <person name="Wakamatsu A."/>
            <person name="Hayashi K."/>
            <person name="Sato H."/>
            <person name="Nagai K."/>
            <person name="Kimura K."/>
            <person name="Makita H."/>
            <person name="Sekine M."/>
            <person name="Obayashi M."/>
            <person name="Nishi T."/>
            <person name="Shibahara T."/>
            <person name="Tanaka T."/>
            <person name="Ishii S."/>
            <person name="Yamamoto J."/>
            <person name="Saito K."/>
            <person name="Kawai Y."/>
            <person name="Isono Y."/>
            <person name="Nakamura Y."/>
            <person name="Nagahari K."/>
            <person name="Murakami K."/>
            <person name="Yasuda T."/>
            <person name="Iwayanagi T."/>
            <person name="Wagatsuma M."/>
            <person name="Shiratori A."/>
            <person name="Sudo H."/>
            <person name="Hosoiri T."/>
            <person name="Kaku Y."/>
            <person name="Kodaira H."/>
            <person name="Kondo H."/>
            <person name="Sugawara M."/>
            <person name="Takahashi M."/>
            <person name="Kanda K."/>
            <person name="Yokoi T."/>
            <person name="Furuya T."/>
            <person name="Kikkawa E."/>
            <person name="Omura Y."/>
            <person name="Abe K."/>
            <person name="Kamihara K."/>
            <person name="Katsuta N."/>
            <person name="Sato K."/>
            <person name="Tanikawa M."/>
            <person name="Yamazaki M."/>
            <person name="Ninomiya K."/>
            <person name="Ishibashi T."/>
            <person name="Yamashita H."/>
            <person name="Murakawa K."/>
            <person name="Fujimori K."/>
            <person name="Tanai H."/>
            <person name="Kimata M."/>
            <person name="Watanabe M."/>
            <person name="Hiraoka S."/>
            <person name="Chiba Y."/>
            <person name="Ishida S."/>
            <person name="Ono Y."/>
            <person name="Takiguchi S."/>
            <person name="Watanabe S."/>
            <person name="Yosida M."/>
            <person name="Hotuta T."/>
            <person name="Kusano J."/>
            <person name="Kanehori K."/>
            <person name="Takahashi-Fujii A."/>
            <person name="Hara H."/>
            <person name="Tanase T.-O."/>
            <person name="Nomura Y."/>
            <person name="Togiya S."/>
            <person name="Komai F."/>
            <person name="Hara R."/>
            <person name="Takeuchi K."/>
            <person name="Arita M."/>
            <person name="Imose N."/>
            <person name="Musashino K."/>
            <person name="Yuuki H."/>
            <person name="Oshima A."/>
            <person name="Sasaki N."/>
            <person name="Aotsuka S."/>
            <person name="Yoshikawa Y."/>
            <person name="Matsunawa H."/>
            <person name="Ichihara T."/>
            <person name="Shiohata N."/>
            <person name="Sano S."/>
            <person name="Moriya S."/>
            <person name="Momiyama H."/>
            <person name="Satoh N."/>
            <person name="Takami S."/>
            <person name="Terashima Y."/>
            <person name="Suzuki O."/>
            <person name="Nakagawa S."/>
            <person name="Senoh A."/>
            <person name="Mizoguchi H."/>
            <person name="Goto Y."/>
            <person name="Shimizu F."/>
            <person name="Wakebe H."/>
            <person name="Hishigaki H."/>
            <person name="Watanabe T."/>
            <person name="Sugiyama A."/>
            <person name="Takemoto M."/>
            <person name="Kawakami B."/>
            <person name="Yamazaki M."/>
            <person name="Watanabe K."/>
            <person name="Kumagai A."/>
            <person name="Itakura S."/>
            <person name="Fukuzumi Y."/>
            <person name="Fujimori Y."/>
            <person name="Komiyama M."/>
            <person name="Tashiro H."/>
            <person name="Tanigami A."/>
            <person name="Fujiwara T."/>
            <person name="Ono T."/>
            <person name="Yamada K."/>
            <person name="Fujii Y."/>
            <person name="Ozaki K."/>
            <person name="Hirao M."/>
            <person name="Ohmori Y."/>
            <person name="Kawabata A."/>
            <person name="Hikiji T."/>
            <person name="Kobatake N."/>
            <person name="Inagaki H."/>
            <person name="Ikema Y."/>
            <person name="Okamoto S."/>
            <person name="Okitani R."/>
            <person name="Kawakami T."/>
            <person name="Noguchi S."/>
            <person name="Itoh T."/>
            <person name="Shigeta K."/>
            <person name="Senba T."/>
            <person name="Matsumura K."/>
            <person name="Nakajima Y."/>
            <person name="Mizuno T."/>
            <person name="Morinaga M."/>
            <person name="Sasaki M."/>
            <person name="Togashi T."/>
            <person name="Oyama M."/>
            <person name="Hata H."/>
            <person name="Watanabe M."/>
            <person name="Komatsu T."/>
            <person name="Mizushima-Sugano J."/>
            <person name="Satoh T."/>
            <person name="Shirai Y."/>
            <person name="Takahashi Y."/>
            <person name="Nakagawa K."/>
            <person name="Okumura K."/>
            <person name="Nagase T."/>
            <person name="Nomura N."/>
            <person name="Kikuchi H."/>
            <person name="Masuho Y."/>
            <person name="Yamashita R."/>
            <person name="Nakai K."/>
            <person name="Yada T."/>
            <person name="Nakamura Y."/>
            <person name="Ohara O."/>
            <person name="Isogai T."/>
            <person name="Sugano S."/>
        </authorList>
    </citation>
    <scope>NUCLEOTIDE SEQUENCE [LARGE SCALE MRNA]</scope>
    <source>
        <tissue>Trachea</tissue>
    </source>
</reference>